<name>SST2_YEAST</name>
<reference key="1">
    <citation type="journal article" date="1987" name="Mol. Cell. Biol.">
        <title>Pheromonal regulation and sequence of the Saccharomyces cerevisiae SST2 gene: a model for desensitization to pheromone.</title>
        <authorList>
            <person name="Dietzel C."/>
            <person name="Kurjan J."/>
        </authorList>
    </citation>
    <scope>NUCLEOTIDE SEQUENCE [GENOMIC DNA]</scope>
</reference>
<reference key="2">
    <citation type="journal article" date="1997" name="Nature">
        <title>The nucleotide sequence of Saccharomyces cerevisiae chromosome XII.</title>
        <authorList>
            <person name="Johnston M."/>
            <person name="Hillier L.W."/>
            <person name="Riles L."/>
            <person name="Albermann K."/>
            <person name="Andre B."/>
            <person name="Ansorge W."/>
            <person name="Benes V."/>
            <person name="Brueckner M."/>
            <person name="Delius H."/>
            <person name="Dubois E."/>
            <person name="Duesterhoeft A."/>
            <person name="Entian K.-D."/>
            <person name="Floeth M."/>
            <person name="Goffeau A."/>
            <person name="Hebling U."/>
            <person name="Heumann K."/>
            <person name="Heuss-Neitzel D."/>
            <person name="Hilbert H."/>
            <person name="Hilger F."/>
            <person name="Kleine K."/>
            <person name="Koetter P."/>
            <person name="Louis E.J."/>
            <person name="Messenguy F."/>
            <person name="Mewes H.-W."/>
            <person name="Miosga T."/>
            <person name="Moestl D."/>
            <person name="Mueller-Auer S."/>
            <person name="Nentwich U."/>
            <person name="Obermaier B."/>
            <person name="Piravandi E."/>
            <person name="Pohl T.M."/>
            <person name="Portetelle D."/>
            <person name="Purnelle B."/>
            <person name="Rechmann S."/>
            <person name="Rieger M."/>
            <person name="Rinke M."/>
            <person name="Rose M."/>
            <person name="Scharfe M."/>
            <person name="Scherens B."/>
            <person name="Scholler P."/>
            <person name="Schwager C."/>
            <person name="Schwarz S."/>
            <person name="Underwood A.P."/>
            <person name="Urrestarazu L.A."/>
            <person name="Vandenbol M."/>
            <person name="Verhasselt P."/>
            <person name="Vierendeels F."/>
            <person name="Voet M."/>
            <person name="Volckaert G."/>
            <person name="Voss H."/>
            <person name="Wambutt R."/>
            <person name="Wedler E."/>
            <person name="Wedler H."/>
            <person name="Zimmermann F.K."/>
            <person name="Zollner A."/>
            <person name="Hani J."/>
            <person name="Hoheisel J.D."/>
        </authorList>
    </citation>
    <scope>NUCLEOTIDE SEQUENCE [LARGE SCALE GENOMIC DNA]</scope>
    <source>
        <strain>ATCC 204508 / S288c</strain>
    </source>
</reference>
<reference key="3">
    <citation type="journal article" date="2014" name="G3 (Bethesda)">
        <title>The reference genome sequence of Saccharomyces cerevisiae: Then and now.</title>
        <authorList>
            <person name="Engel S.R."/>
            <person name="Dietrich F.S."/>
            <person name="Fisk D.G."/>
            <person name="Binkley G."/>
            <person name="Balakrishnan R."/>
            <person name="Costanzo M.C."/>
            <person name="Dwight S.S."/>
            <person name="Hitz B.C."/>
            <person name="Karra K."/>
            <person name="Nash R.S."/>
            <person name="Weng S."/>
            <person name="Wong E.D."/>
            <person name="Lloyd P."/>
            <person name="Skrzypek M.S."/>
            <person name="Miyasato S.R."/>
            <person name="Simison M."/>
            <person name="Cherry J.M."/>
        </authorList>
    </citation>
    <scope>GENOME REANNOTATION</scope>
    <source>
        <strain>ATCC 204508 / S288c</strain>
    </source>
</reference>
<reference key="4">
    <citation type="journal article" date="1999" name="J. Biol. Chem.">
        <title>Feedback phosphorylation of an RGS protein by MAP kinase in yeast.</title>
        <authorList>
            <person name="Garrison T.R."/>
            <person name="Zhang Y."/>
            <person name="Pausch M."/>
            <person name="Apanovitch D."/>
            <person name="Aebersold R."/>
            <person name="Dohlman H.G."/>
        </authorList>
    </citation>
    <scope>PHOSPHORYLATION AT SER-539</scope>
</reference>
<reference key="5">
    <citation type="journal article" date="2003" name="Mol. Cell">
        <title>Assigning function to yeast proteins by integration of technologies.</title>
        <authorList>
            <person name="Hazbun T.R."/>
            <person name="Malmstroem L."/>
            <person name="Anderson S."/>
            <person name="Graczyk B.J."/>
            <person name="Fox B."/>
            <person name="Riffle M."/>
            <person name="Sundin B.A."/>
            <person name="Aranda J.D."/>
            <person name="McDonald W.H."/>
            <person name="Chiu C.-H."/>
            <person name="Snydsman B.E."/>
            <person name="Bradley P."/>
            <person name="Muller E.G.D."/>
            <person name="Fields S."/>
            <person name="Baker D."/>
            <person name="Yates J.R. III"/>
            <person name="Davis T.N."/>
        </authorList>
    </citation>
    <scope>IDENTIFICATION BY MASS SPECTROMETRY</scope>
</reference>
<reference key="6">
    <citation type="journal article" date="2003" name="Nature">
        <title>Global analysis of protein expression in yeast.</title>
        <authorList>
            <person name="Ghaemmaghami S."/>
            <person name="Huh W.-K."/>
            <person name="Bower K."/>
            <person name="Howson R.W."/>
            <person name="Belle A."/>
            <person name="Dephoure N."/>
            <person name="O'Shea E.K."/>
            <person name="Weissman J.S."/>
        </authorList>
    </citation>
    <scope>LEVEL OF PROTEIN EXPRESSION [LARGE SCALE ANALYSIS]</scope>
</reference>
<reference key="7">
    <citation type="journal article" date="2005" name="Mol. Cell. Proteomics">
        <title>Quantitative phosphoproteomics applied to the yeast pheromone signaling pathway.</title>
        <authorList>
            <person name="Gruhler A."/>
            <person name="Olsen J.V."/>
            <person name="Mohammed S."/>
            <person name="Mortensen P."/>
            <person name="Faergeman N.J."/>
            <person name="Mann M."/>
            <person name="Jensen O.N."/>
        </authorList>
    </citation>
    <scope>IDENTIFICATION BY MASS SPECTROMETRY [LARGE SCALE ANALYSIS]</scope>
    <source>
        <strain>YAL6B</strain>
    </source>
</reference>
<reference key="8">
    <citation type="journal article" date="2007" name="J. Proteome Res.">
        <title>Large-scale phosphorylation analysis of alpha-factor-arrested Saccharomyces cerevisiae.</title>
        <authorList>
            <person name="Li X."/>
            <person name="Gerber S.A."/>
            <person name="Rudner A.D."/>
            <person name="Beausoleil S.A."/>
            <person name="Haas W."/>
            <person name="Villen J."/>
            <person name="Elias J.E."/>
            <person name="Gygi S.P."/>
        </authorList>
    </citation>
    <scope>PHOSPHORYLATION [LARGE SCALE ANALYSIS] AT SER-252 AND SER-587</scope>
    <scope>IDENTIFICATION BY MASS SPECTROMETRY [LARGE SCALE ANALYSIS]</scope>
    <source>
        <strain>ADR376</strain>
    </source>
</reference>
<reference key="9">
    <citation type="journal article" date="2008" name="Mol. Cell. Proteomics">
        <title>A multidimensional chromatography technology for in-depth phosphoproteome analysis.</title>
        <authorList>
            <person name="Albuquerque C.P."/>
            <person name="Smolka M.B."/>
            <person name="Payne S.H."/>
            <person name="Bafna V."/>
            <person name="Eng J."/>
            <person name="Zhou H."/>
        </authorList>
    </citation>
    <scope>PHOSPHORYLATION [LARGE SCALE ANALYSIS] AT SER-408 AND SER-587</scope>
    <scope>IDENTIFICATION BY MASS SPECTROMETRY [LARGE SCALE ANALYSIS]</scope>
</reference>
<reference key="10">
    <citation type="journal article" date="2009" name="Science">
        <title>Global analysis of Cdk1 substrate phosphorylation sites provides insights into evolution.</title>
        <authorList>
            <person name="Holt L.J."/>
            <person name="Tuch B.B."/>
            <person name="Villen J."/>
            <person name="Johnson A.D."/>
            <person name="Gygi S.P."/>
            <person name="Morgan D.O."/>
        </authorList>
    </citation>
    <scope>IDENTIFICATION BY MASS SPECTROMETRY [LARGE SCALE ANALYSIS]</scope>
</reference>
<accession>P11972</accession>
<accession>D6VZ86</accession>
<accession>Q06207</accession>
<comment type="function">
    <text>Desensitization to alpha-factor pheromone. Is involved in regulating the signaling pathway for responding to mating pheromone.</text>
</comment>
<comment type="interaction">
    <interactant intactId="EBI-18232">
        <id>P11972</id>
    </interactant>
    <interactant intactId="EBI-7376">
        <id>P08539</id>
        <label>GPA1</label>
    </interactant>
    <organismsDiffer>false</organismsDiffer>
    <experiments>3</experiments>
</comment>
<comment type="interaction">
    <interactant intactId="EBI-18232">
        <id>P11972</id>
    </interactant>
    <interactant intactId="EBI-18360">
        <id>P0CI39</id>
        <label>STE2</label>
    </interactant>
    <organismsDiffer>true</organismsDiffer>
    <experiments>4</experiments>
</comment>
<comment type="induction">
    <text>By exposure to pheromone.</text>
</comment>
<comment type="domain">
    <text evidence="1">The fungal-differentiation regulator (Fungal-DR) domain is only found in fungal regulator of G-protein signaling (RGS) proteins that regulate differentiation pathways. It is required for function (By similarity).</text>
</comment>
<comment type="PTM">
    <text evidence="5">Phosphorylated by FUS3 and KSS1.</text>
</comment>
<comment type="miscellaneous">
    <text evidence="6">Present with 5980 molecules/cell in log phase SD medium.</text>
</comment>
<keyword id="KW-0589">Pheromone response</keyword>
<keyword id="KW-0597">Phosphoprotein</keyword>
<keyword id="KW-1185">Reference proteome</keyword>
<keyword id="KW-0734">Signal transduction inhibitor</keyword>
<feature type="chain" id="PRO_0000204173" description="Protein SST2">
    <location>
        <begin position="1"/>
        <end position="698"/>
    </location>
</feature>
<feature type="domain" description="DEP" evidence="2">
    <location>
        <begin position="273"/>
        <end position="358"/>
    </location>
</feature>
<feature type="domain" description="RGS" evidence="3">
    <location>
        <begin position="420"/>
        <end position="689"/>
    </location>
</feature>
<feature type="region of interest" description="Fungal-DR">
    <location>
        <begin position="10"/>
        <end position="203"/>
    </location>
</feature>
<feature type="region of interest" description="Disordered" evidence="4">
    <location>
        <begin position="545"/>
        <end position="586"/>
    </location>
</feature>
<feature type="compositionally biased region" description="Low complexity" evidence="4">
    <location>
        <begin position="551"/>
        <end position="570"/>
    </location>
</feature>
<feature type="modified residue" description="Phosphoserine" evidence="8">
    <location>
        <position position="252"/>
    </location>
</feature>
<feature type="modified residue" description="Phosphoserine" evidence="9">
    <location>
        <position position="408"/>
    </location>
</feature>
<feature type="modified residue" description="Phosphoserine; by MAPK" evidence="5">
    <location>
        <position position="539"/>
    </location>
</feature>
<feature type="modified residue" description="Phosphoserine" evidence="8 9">
    <location>
        <position position="587"/>
    </location>
</feature>
<feature type="sequence conflict" description="In Ref. 1; AAA35104." evidence="7" ref="1">
    <original>H</original>
    <variation>D</variation>
    <location>
        <position position="616"/>
    </location>
</feature>
<feature type="sequence conflict" description="In Ref. 1; AAA35104." evidence="7" ref="1">
    <original>E</original>
    <variation>D</variation>
    <location>
        <position position="644"/>
    </location>
</feature>
<protein>
    <recommendedName>
        <fullName>Protein SST2</fullName>
    </recommendedName>
</protein>
<evidence type="ECO:0000250" key="1"/>
<evidence type="ECO:0000255" key="2">
    <source>
        <dbReference type="PROSITE-ProRule" id="PRU00066"/>
    </source>
</evidence>
<evidence type="ECO:0000255" key="3">
    <source>
        <dbReference type="PROSITE-ProRule" id="PRU00171"/>
    </source>
</evidence>
<evidence type="ECO:0000256" key="4">
    <source>
        <dbReference type="SAM" id="MobiDB-lite"/>
    </source>
</evidence>
<evidence type="ECO:0000269" key="5">
    <source>
    </source>
</evidence>
<evidence type="ECO:0000269" key="6">
    <source>
    </source>
</evidence>
<evidence type="ECO:0000305" key="7"/>
<evidence type="ECO:0007744" key="8">
    <source>
    </source>
</evidence>
<evidence type="ECO:0007744" key="9">
    <source>
    </source>
</evidence>
<proteinExistence type="evidence at protein level"/>
<dbReference type="EMBL" id="M18105">
    <property type="protein sequence ID" value="AAA35104.1"/>
    <property type="molecule type" value="Genomic_DNA"/>
</dbReference>
<dbReference type="EMBL" id="U22382">
    <property type="protein sequence ID" value="AAB67534.1"/>
    <property type="molecule type" value="Genomic_DNA"/>
</dbReference>
<dbReference type="EMBL" id="BK006945">
    <property type="protein sequence ID" value="DAA09752.1"/>
    <property type="molecule type" value="Genomic_DNA"/>
</dbReference>
<dbReference type="PIR" id="S55974">
    <property type="entry name" value="S55974"/>
</dbReference>
<dbReference type="RefSeq" id="NP_013557.1">
    <property type="nucleotide sequence ID" value="NM_001182340.1"/>
</dbReference>
<dbReference type="BioGRID" id="31710">
    <property type="interactions" value="446"/>
</dbReference>
<dbReference type="DIP" id="DIP-2354N"/>
<dbReference type="FunCoup" id="P11972">
    <property type="interactions" value="245"/>
</dbReference>
<dbReference type="IntAct" id="P11972">
    <property type="interactions" value="12"/>
</dbReference>
<dbReference type="MINT" id="P11972"/>
<dbReference type="STRING" id="4932.YLR452C"/>
<dbReference type="iPTMnet" id="P11972"/>
<dbReference type="PaxDb" id="4932-YLR452C"/>
<dbReference type="PeptideAtlas" id="P11972"/>
<dbReference type="EnsemblFungi" id="YLR452C_mRNA">
    <property type="protein sequence ID" value="YLR452C"/>
    <property type="gene ID" value="YLR452C"/>
</dbReference>
<dbReference type="GeneID" id="851173"/>
<dbReference type="KEGG" id="sce:YLR452C"/>
<dbReference type="AGR" id="SGD:S000004444"/>
<dbReference type="SGD" id="S000004444">
    <property type="gene designation" value="SST2"/>
</dbReference>
<dbReference type="VEuPathDB" id="FungiDB:YLR452C"/>
<dbReference type="eggNOG" id="KOG3589">
    <property type="taxonomic scope" value="Eukaryota"/>
</dbReference>
<dbReference type="HOGENOM" id="CLU_024143_0_0_1"/>
<dbReference type="InParanoid" id="P11972"/>
<dbReference type="OMA" id="DPGMRYL"/>
<dbReference type="OrthoDB" id="196547at2759"/>
<dbReference type="BioCyc" id="YEAST:G3O-32505-MONOMER"/>
<dbReference type="Reactome" id="R-SCE-416476">
    <property type="pathway name" value="G alpha (q) signalling events"/>
</dbReference>
<dbReference type="Reactome" id="R-SCE-418594">
    <property type="pathway name" value="G alpha (i) signalling events"/>
</dbReference>
<dbReference type="Reactome" id="R-SCE-418597">
    <property type="pathway name" value="G alpha (z) signalling events"/>
</dbReference>
<dbReference type="BioGRID-ORCS" id="851173">
    <property type="hits" value="0 hits in 10 CRISPR screens"/>
</dbReference>
<dbReference type="CD-CODE" id="E03F929F">
    <property type="entry name" value="Stress granule"/>
</dbReference>
<dbReference type="PRO" id="PR:P11972"/>
<dbReference type="Proteomes" id="UP000002311">
    <property type="component" value="Chromosome XII"/>
</dbReference>
<dbReference type="RNAct" id="P11972">
    <property type="molecule type" value="protein"/>
</dbReference>
<dbReference type="GO" id="GO:0005886">
    <property type="term" value="C:plasma membrane"/>
    <property type="evidence" value="ECO:0000314"/>
    <property type="project" value="SGD"/>
</dbReference>
<dbReference type="GO" id="GO:0005096">
    <property type="term" value="F:GTPase activator activity"/>
    <property type="evidence" value="ECO:0000314"/>
    <property type="project" value="SGD"/>
</dbReference>
<dbReference type="GO" id="GO:0071444">
    <property type="term" value="P:cellular response to pheromone"/>
    <property type="evidence" value="ECO:0000315"/>
    <property type="project" value="SGD"/>
</dbReference>
<dbReference type="GO" id="GO:0000747">
    <property type="term" value="P:conjugation with cellular fusion"/>
    <property type="evidence" value="ECO:0000315"/>
    <property type="project" value="SGD"/>
</dbReference>
<dbReference type="GO" id="GO:0035556">
    <property type="term" value="P:intracellular signal transduction"/>
    <property type="evidence" value="ECO:0007669"/>
    <property type="project" value="InterPro"/>
</dbReference>
<dbReference type="GO" id="GO:0009968">
    <property type="term" value="P:negative regulation of signal transduction"/>
    <property type="evidence" value="ECO:0007669"/>
    <property type="project" value="UniProtKB-KW"/>
</dbReference>
<dbReference type="GO" id="GO:0007165">
    <property type="term" value="P:signal transduction"/>
    <property type="evidence" value="ECO:0000315"/>
    <property type="project" value="SGD"/>
</dbReference>
<dbReference type="CDD" id="cd04450">
    <property type="entry name" value="DEP_RGS7-like"/>
    <property type="match status" value="1"/>
</dbReference>
<dbReference type="FunFam" id="1.10.10.10:FF:000842">
    <property type="entry name" value="Sst2p"/>
    <property type="match status" value="1"/>
</dbReference>
<dbReference type="Gene3D" id="1.10.167.10">
    <property type="entry name" value="Regulator of G-protein Signalling 4, domain 2"/>
    <property type="match status" value="1"/>
</dbReference>
<dbReference type="Gene3D" id="1.10.10.10">
    <property type="entry name" value="Winged helix-like DNA-binding domain superfamily/Winged helix DNA-binding domain"/>
    <property type="match status" value="1"/>
</dbReference>
<dbReference type="InterPro" id="IPR000591">
    <property type="entry name" value="DEP_dom"/>
</dbReference>
<dbReference type="InterPro" id="IPR016137">
    <property type="entry name" value="RGS"/>
</dbReference>
<dbReference type="InterPro" id="IPR036305">
    <property type="entry name" value="RGS_sf"/>
</dbReference>
<dbReference type="InterPro" id="IPR044926">
    <property type="entry name" value="RGS_subdomain_2"/>
</dbReference>
<dbReference type="InterPro" id="IPR036388">
    <property type="entry name" value="WH-like_DNA-bd_sf"/>
</dbReference>
<dbReference type="InterPro" id="IPR036390">
    <property type="entry name" value="WH_DNA-bd_sf"/>
</dbReference>
<dbReference type="PANTHER" id="PTHR10845:SF192">
    <property type="entry name" value="DOUBLE HIT, ISOFORM B"/>
    <property type="match status" value="1"/>
</dbReference>
<dbReference type="PANTHER" id="PTHR10845">
    <property type="entry name" value="REGULATOR OF G PROTEIN SIGNALING"/>
    <property type="match status" value="1"/>
</dbReference>
<dbReference type="Pfam" id="PF00610">
    <property type="entry name" value="DEP"/>
    <property type="match status" value="1"/>
</dbReference>
<dbReference type="Pfam" id="PF00615">
    <property type="entry name" value="RGS"/>
    <property type="match status" value="1"/>
</dbReference>
<dbReference type="SMART" id="SM00049">
    <property type="entry name" value="DEP"/>
    <property type="match status" value="2"/>
</dbReference>
<dbReference type="SMART" id="SM00315">
    <property type="entry name" value="RGS"/>
    <property type="match status" value="1"/>
</dbReference>
<dbReference type="SUPFAM" id="SSF48097">
    <property type="entry name" value="Regulator of G-protein signaling, RGS"/>
    <property type="match status" value="1"/>
</dbReference>
<dbReference type="SUPFAM" id="SSF46785">
    <property type="entry name" value="Winged helix' DNA-binding domain"/>
    <property type="match status" value="1"/>
</dbReference>
<dbReference type="PROSITE" id="PS50186">
    <property type="entry name" value="DEP"/>
    <property type="match status" value="1"/>
</dbReference>
<dbReference type="PROSITE" id="PS50132">
    <property type="entry name" value="RGS"/>
    <property type="match status" value="1"/>
</dbReference>
<organism>
    <name type="scientific">Saccharomyces cerevisiae (strain ATCC 204508 / S288c)</name>
    <name type="common">Baker's yeast</name>
    <dbReference type="NCBI Taxonomy" id="559292"/>
    <lineage>
        <taxon>Eukaryota</taxon>
        <taxon>Fungi</taxon>
        <taxon>Dikarya</taxon>
        <taxon>Ascomycota</taxon>
        <taxon>Saccharomycotina</taxon>
        <taxon>Saccharomycetes</taxon>
        <taxon>Saccharomycetales</taxon>
        <taxon>Saccharomycetaceae</taxon>
        <taxon>Saccharomyces</taxon>
    </lineage>
</organism>
<gene>
    <name type="primary">SST2</name>
    <name type="ordered locus">YLR452C</name>
    <name type="ORF">L9324.9</name>
</gene>
<sequence>MVDKNRTLHELSSKNFSRTPNGLIFTNDLKTVYSIFLICLDLKEKKHSSDTKSFLLTAFTKHFHFTFTYQEAIKAMGQLELKVDMNTTCINVSYNIKPSLARHLLTLFMSSKLLHTPQDRTRGEPKEKVLFQPTPKGVAVLQKYVRDIGLKTMPDILLSSFNSMKLFTFERSSVTDSIIHSDYLIHILFIKMMGAKPNVWSPTNADDPLPCLSSLLEYTNNDDTFTFEKSKPEQGWQAQIGNIDINDLERVSPLAHRFFTNPDSESHTQYYVSNAGIRLFENKTFGTSKKIVIKYTFTTKAIWQWIMDCTDIMHVKEAVSLAALFLKTGLIVPVLLQPSRTDKKKFQISRSSFFTLSKRGWDLVSWTGCKSNNIRAPNGSTIDLDFTLRGHMTVRDEKKTLDDSEGFSQDMLISSSNLNKLDYVLTDPGMRYLFRRHLEKELCVENLDVFIEIKRFLKKMTILKKLIDSKHCDKKSNTSTSKNNIVKTIDSALMKQANECLEMAYHIYSSYIMIGSPYQLNIHHNLRQNISDIMLHPHSPLSEHFPTNLYDPSPASAESAASSISSTEADTLGEPPEVSLKPSKNLSNENCSFKKQGFKHQLKEYKPAPLTLAETHSPNASVENSHTIVRYGMDNTQNDTKSVESFPATLKVLRKLYPLFEIVSNEMYRLMNNDSFQKFTQSDVYKDASALIEIQEKC</sequence>